<keyword id="KW-0028">Amino-acid biosynthesis</keyword>
<keyword id="KW-0378">Hydrolase</keyword>
<keyword id="KW-0486">Methionine biosynthesis</keyword>
<name>MTNN_STAES</name>
<feature type="chain" id="PRO_0000359376" description="5'-methylthioadenosine/S-adenosylhomocysteine nucleosidase">
    <location>
        <begin position="1"/>
        <end position="228"/>
    </location>
</feature>
<feature type="active site" description="Proton acceptor" evidence="1">
    <location>
        <position position="11"/>
    </location>
</feature>
<feature type="active site" description="Proton donor" evidence="1">
    <location>
        <position position="196"/>
    </location>
</feature>
<feature type="binding site" evidence="1">
    <location>
        <position position="77"/>
    </location>
    <ligand>
        <name>substrate</name>
    </ligand>
</feature>
<feature type="binding site" evidence="1">
    <location>
        <position position="151"/>
    </location>
    <ligand>
        <name>substrate</name>
    </ligand>
</feature>
<feature type="binding site" evidence="1">
    <location>
        <begin position="172"/>
        <end position="173"/>
    </location>
    <ligand>
        <name>substrate</name>
    </ligand>
</feature>
<sequence length="228" mass="24944">MIGIIGAMEEEVTILKRKLNDMNEINIAHVKFYVGKLNHKEVVLTQSGIGKVNASISTTLLIEKFNPEVVINTGSAGALDQTLSIGDILVSNHVLYHDANATAFGYEYGQIPQMPKTYTTDPTLLKKTMHVLEQQQLNGKVGMIVSGDSFIGSSEQRQKIKQQFPEAMAVEMEATAIAQTCYQFKVPFIVTRAVSDLANGKADISFEEFLDKAALSSSETVSLLVESL</sequence>
<gene>
    <name evidence="1" type="primary">mtnN</name>
    <name type="ordered locus">SE_1285</name>
</gene>
<protein>
    <recommendedName>
        <fullName evidence="1">5'-methylthioadenosine/S-adenosylhomocysteine nucleosidase</fullName>
        <shortName evidence="1">MTA/SAH nucleosidase</shortName>
        <shortName evidence="1">MTAN</shortName>
        <ecNumber evidence="1">3.2.2.9</ecNumber>
    </recommendedName>
    <alternativeName>
        <fullName evidence="1">5'-deoxyadenosine nucleosidase</fullName>
        <shortName evidence="1">DOA nucleosidase</shortName>
        <shortName evidence="1">dAdo nucleosidase</shortName>
    </alternativeName>
    <alternativeName>
        <fullName evidence="1">5'-methylthioadenosine nucleosidase</fullName>
        <shortName evidence="1">MTA nucleosidase</shortName>
    </alternativeName>
    <alternativeName>
        <fullName evidence="1">S-adenosylhomocysteine nucleosidase</fullName>
        <shortName evidence="1">AdoHcy nucleosidase</shortName>
        <shortName evidence="1">SAH nucleosidase</shortName>
        <shortName evidence="1">SRH nucleosidase</shortName>
    </alternativeName>
</protein>
<proteinExistence type="inferred from homology"/>
<evidence type="ECO:0000255" key="1">
    <source>
        <dbReference type="HAMAP-Rule" id="MF_01684"/>
    </source>
</evidence>
<reference key="1">
    <citation type="journal article" date="2003" name="Mol. Microbiol.">
        <title>Genome-based analysis of virulence genes in a non-biofilm-forming Staphylococcus epidermidis strain (ATCC 12228).</title>
        <authorList>
            <person name="Zhang Y.-Q."/>
            <person name="Ren S.-X."/>
            <person name="Li H.-L."/>
            <person name="Wang Y.-X."/>
            <person name="Fu G."/>
            <person name="Yang J."/>
            <person name="Qin Z.-Q."/>
            <person name="Miao Y.-G."/>
            <person name="Wang W.-Y."/>
            <person name="Chen R.-S."/>
            <person name="Shen Y."/>
            <person name="Chen Z."/>
            <person name="Yuan Z.-H."/>
            <person name="Zhao G.-P."/>
            <person name="Qu D."/>
            <person name="Danchin A."/>
            <person name="Wen Y.-M."/>
        </authorList>
    </citation>
    <scope>NUCLEOTIDE SEQUENCE [LARGE SCALE GENOMIC DNA]</scope>
    <source>
        <strain>ATCC 12228 / FDA PCI 1200</strain>
    </source>
</reference>
<accession>Q8CP08</accession>
<dbReference type="EC" id="3.2.2.9" evidence="1"/>
<dbReference type="EMBL" id="AE015929">
    <property type="protein sequence ID" value="AAO04884.1"/>
    <property type="molecule type" value="Genomic_DNA"/>
</dbReference>
<dbReference type="RefSeq" id="NP_764840.1">
    <property type="nucleotide sequence ID" value="NC_004461.1"/>
</dbReference>
<dbReference type="RefSeq" id="WP_001831322.1">
    <property type="nucleotide sequence ID" value="NZ_WBME01000008.1"/>
</dbReference>
<dbReference type="SMR" id="Q8CP08"/>
<dbReference type="KEGG" id="sep:SE_1285"/>
<dbReference type="PATRIC" id="fig|176280.10.peg.1254"/>
<dbReference type="eggNOG" id="COG0775">
    <property type="taxonomic scope" value="Bacteria"/>
</dbReference>
<dbReference type="HOGENOM" id="CLU_031248_2_2_9"/>
<dbReference type="OrthoDB" id="9792278at2"/>
<dbReference type="UniPathway" id="UPA00904">
    <property type="reaction ID" value="UER00871"/>
</dbReference>
<dbReference type="Proteomes" id="UP000001411">
    <property type="component" value="Chromosome"/>
</dbReference>
<dbReference type="GO" id="GO:0005829">
    <property type="term" value="C:cytosol"/>
    <property type="evidence" value="ECO:0007669"/>
    <property type="project" value="TreeGrafter"/>
</dbReference>
<dbReference type="GO" id="GO:0008782">
    <property type="term" value="F:adenosylhomocysteine nucleosidase activity"/>
    <property type="evidence" value="ECO:0007669"/>
    <property type="project" value="UniProtKB-UniRule"/>
</dbReference>
<dbReference type="GO" id="GO:0008930">
    <property type="term" value="F:methylthioadenosine nucleosidase activity"/>
    <property type="evidence" value="ECO:0007669"/>
    <property type="project" value="UniProtKB-UniRule"/>
</dbReference>
<dbReference type="GO" id="GO:0019509">
    <property type="term" value="P:L-methionine salvage from methylthioadenosine"/>
    <property type="evidence" value="ECO:0007669"/>
    <property type="project" value="UniProtKB-UniRule"/>
</dbReference>
<dbReference type="GO" id="GO:0019284">
    <property type="term" value="P:L-methionine salvage from S-adenosylmethionine"/>
    <property type="evidence" value="ECO:0007669"/>
    <property type="project" value="TreeGrafter"/>
</dbReference>
<dbReference type="GO" id="GO:0009164">
    <property type="term" value="P:nucleoside catabolic process"/>
    <property type="evidence" value="ECO:0007669"/>
    <property type="project" value="InterPro"/>
</dbReference>
<dbReference type="CDD" id="cd09008">
    <property type="entry name" value="MTAN"/>
    <property type="match status" value="1"/>
</dbReference>
<dbReference type="FunFam" id="3.40.50.1580:FF:000001">
    <property type="entry name" value="MTA/SAH nucleosidase family protein"/>
    <property type="match status" value="1"/>
</dbReference>
<dbReference type="Gene3D" id="3.40.50.1580">
    <property type="entry name" value="Nucleoside phosphorylase domain"/>
    <property type="match status" value="1"/>
</dbReference>
<dbReference type="HAMAP" id="MF_01684">
    <property type="entry name" value="Salvage_MtnN"/>
    <property type="match status" value="1"/>
</dbReference>
<dbReference type="InterPro" id="IPR010049">
    <property type="entry name" value="MTA_SAH_Nsdase"/>
</dbReference>
<dbReference type="InterPro" id="IPR000845">
    <property type="entry name" value="Nucleoside_phosphorylase_d"/>
</dbReference>
<dbReference type="InterPro" id="IPR035994">
    <property type="entry name" value="Nucleoside_phosphorylase_sf"/>
</dbReference>
<dbReference type="NCBIfam" id="TIGR01704">
    <property type="entry name" value="MTA_SAH-Nsdase"/>
    <property type="match status" value="1"/>
</dbReference>
<dbReference type="NCBIfam" id="NF004079">
    <property type="entry name" value="PRK05584.1"/>
    <property type="match status" value="1"/>
</dbReference>
<dbReference type="PANTHER" id="PTHR46832">
    <property type="entry name" value="5'-METHYLTHIOADENOSINE/S-ADENOSYLHOMOCYSTEINE NUCLEOSIDASE"/>
    <property type="match status" value="1"/>
</dbReference>
<dbReference type="PANTHER" id="PTHR46832:SF1">
    <property type="entry name" value="5'-METHYLTHIOADENOSINE_S-ADENOSYLHOMOCYSTEINE NUCLEOSIDASE"/>
    <property type="match status" value="1"/>
</dbReference>
<dbReference type="Pfam" id="PF01048">
    <property type="entry name" value="PNP_UDP_1"/>
    <property type="match status" value="1"/>
</dbReference>
<dbReference type="SUPFAM" id="SSF53167">
    <property type="entry name" value="Purine and uridine phosphorylases"/>
    <property type="match status" value="1"/>
</dbReference>
<organism>
    <name type="scientific">Staphylococcus epidermidis (strain ATCC 12228 / FDA PCI 1200)</name>
    <dbReference type="NCBI Taxonomy" id="176280"/>
    <lineage>
        <taxon>Bacteria</taxon>
        <taxon>Bacillati</taxon>
        <taxon>Bacillota</taxon>
        <taxon>Bacilli</taxon>
        <taxon>Bacillales</taxon>
        <taxon>Staphylococcaceae</taxon>
        <taxon>Staphylococcus</taxon>
    </lineage>
</organism>
<comment type="function">
    <text evidence="1">Catalyzes the irreversible cleavage of the glycosidic bond in both 5'-methylthioadenosine (MTA) and S-adenosylhomocysteine (SAH/AdoHcy) to adenine and the corresponding thioribose, 5'-methylthioribose and S-ribosylhomocysteine, respectively. Also cleaves 5'-deoxyadenosine, a toxic by-product of radical S-adenosylmethionine (SAM) enzymes, into 5-deoxyribose and adenine.</text>
</comment>
<comment type="catalytic activity">
    <reaction evidence="1">
        <text>S-adenosyl-L-homocysteine + H2O = S-(5-deoxy-D-ribos-5-yl)-L-homocysteine + adenine</text>
        <dbReference type="Rhea" id="RHEA:17805"/>
        <dbReference type="ChEBI" id="CHEBI:15377"/>
        <dbReference type="ChEBI" id="CHEBI:16708"/>
        <dbReference type="ChEBI" id="CHEBI:57856"/>
        <dbReference type="ChEBI" id="CHEBI:58195"/>
        <dbReference type="EC" id="3.2.2.9"/>
    </reaction>
</comment>
<comment type="catalytic activity">
    <reaction evidence="1">
        <text>S-methyl-5'-thioadenosine + H2O = 5-(methylsulfanyl)-D-ribose + adenine</text>
        <dbReference type="Rhea" id="RHEA:13617"/>
        <dbReference type="ChEBI" id="CHEBI:15377"/>
        <dbReference type="ChEBI" id="CHEBI:16708"/>
        <dbReference type="ChEBI" id="CHEBI:17509"/>
        <dbReference type="ChEBI" id="CHEBI:78440"/>
        <dbReference type="EC" id="3.2.2.9"/>
    </reaction>
</comment>
<comment type="catalytic activity">
    <reaction evidence="1">
        <text>5'-deoxyadenosine + H2O = 5-deoxy-D-ribose + adenine</text>
        <dbReference type="Rhea" id="RHEA:29859"/>
        <dbReference type="ChEBI" id="CHEBI:15377"/>
        <dbReference type="ChEBI" id="CHEBI:16708"/>
        <dbReference type="ChEBI" id="CHEBI:17319"/>
        <dbReference type="ChEBI" id="CHEBI:149540"/>
        <dbReference type="EC" id="3.2.2.9"/>
    </reaction>
    <physiologicalReaction direction="left-to-right" evidence="1">
        <dbReference type="Rhea" id="RHEA:29860"/>
    </physiologicalReaction>
</comment>
<comment type="pathway">
    <text evidence="1">Amino-acid biosynthesis; L-methionine biosynthesis via salvage pathway; S-methyl-5-thio-alpha-D-ribose 1-phosphate from S-methyl-5'-thioadenosine (hydrolase route): step 1/2.</text>
</comment>
<comment type="similarity">
    <text evidence="1">Belongs to the PNP/UDP phosphorylase family. MtnN subfamily.</text>
</comment>